<feature type="chain" id="PRO_0000189585" description="Motility protein B">
    <location>
        <begin position="1"/>
        <end position="308"/>
    </location>
</feature>
<feature type="topological domain" description="Cytoplasmic" evidence="7">
    <location>
        <begin position="1"/>
        <end position="27"/>
    </location>
</feature>
<feature type="transmembrane region" description="Helical; Signal-anchor for type II membrane protein" evidence="6">
    <location>
        <begin position="28"/>
        <end position="49"/>
    </location>
</feature>
<feature type="topological domain" description="Periplasmic" evidence="7">
    <location>
        <begin position="50"/>
        <end position="308"/>
    </location>
</feature>
<feature type="domain" description="OmpA-like" evidence="1">
    <location>
        <begin position="148"/>
        <end position="268"/>
    </location>
</feature>
<feature type="region of interest" description="Disordered" evidence="2">
    <location>
        <begin position="73"/>
        <end position="101"/>
    </location>
</feature>
<feature type="region of interest" description="Disordered" evidence="2">
    <location>
        <begin position="277"/>
        <end position="308"/>
    </location>
</feature>
<feature type="compositionally biased region" description="Polar residues" evidence="2">
    <location>
        <begin position="90"/>
        <end position="101"/>
    </location>
</feature>
<feature type="mutagenesis site" description="Complete loss of motility.">
    <original>A</original>
    <variation>T</variation>
    <location>
        <position position="31"/>
    </location>
</feature>
<feature type="mutagenesis site" description="Complete loss of motility." evidence="4">
    <original>D</original>
    <variation>N</variation>
    <location>
        <position position="32"/>
    </location>
</feature>
<feature type="mutagenesis site" description="Complete loss of motility." evidence="4">
    <original>A</original>
    <variation>V</variation>
    <location>
        <position position="39"/>
    </location>
</feature>
<feature type="mutagenesis site" description="Decreased motility, subnormal torque, tethered strains rotate very slowly." evidence="4">
    <original>P</original>
    <variation>I</variation>
    <location>
        <position position="159"/>
    </location>
</feature>
<feature type="mutagenesis site" description="Complete loss of motility." evidence="4">
    <original>G</original>
    <variation>D</variation>
    <location>
        <position position="164"/>
    </location>
</feature>
<feature type="mutagenesis site" description="Complete loss of motility." evidence="4">
    <original>T</original>
    <variation>I</variation>
    <location>
        <position position="196"/>
    </location>
</feature>
<feature type="mutagenesis site" description="Complete loss of motility." evidence="4">
    <original>D</original>
    <variation>N</variation>
    <location>
        <position position="197"/>
    </location>
</feature>
<feature type="mutagenesis site" description="Decreased motility, subnormal torque, tethered strains rotate very slowly, maybe reduced affinity for the motor." evidence="4">
    <original>E</original>
    <variation>K</variation>
    <location>
        <position position="205"/>
    </location>
</feature>
<feature type="mutagenesis site" description="Complete loss of motility." evidence="4">
    <original>S</original>
    <variation>F</variation>
    <location>
        <position position="214"/>
    </location>
</feature>
<feature type="mutagenesis site" description="Complete loss of motility." evidence="4">
    <original>R</original>
    <variation>W</variation>
    <location>
        <position position="217"/>
    </location>
</feature>
<feature type="mutagenesis site" description="Complete loss of motility." evidence="4">
    <original>R</original>
    <variation>H</variation>
    <location>
        <position position="222"/>
    </location>
</feature>
<feature type="mutagenesis site" description="Decreased motility, subnormal torque, tethered strains rotate very slowly." evidence="4">
    <original>G</original>
    <variation>D</variation>
    <location>
        <position position="240"/>
    </location>
</feature>
<feature type="mutagenesis site" description="Complete loss of motility." evidence="4">
    <original>A</original>
    <variation>T</variation>
    <variation>V</variation>
    <location>
        <position position="242"/>
    </location>
</feature>
<feature type="mutagenesis site" description="Complete loss of motility." evidence="4">
    <original>R</original>
    <variation>C</variation>
    <variation>H</variation>
    <location>
        <position position="258"/>
    </location>
</feature>
<reference key="1">
    <citation type="journal article" date="1986" name="J. Bacteriol.">
        <title>Nucleotide sequence of the Escherichia coli motB gene and site-limited incorporation of its product into the cytoplasmic membrane.</title>
        <authorList>
            <person name="Stader J."/>
            <person name="Matsumura P."/>
            <person name="Vacante D."/>
            <person name="Dean G.E."/>
            <person name="Macnab R.M."/>
        </authorList>
    </citation>
    <scope>NUCLEOTIDE SEQUENCE [GENOMIC DNA]</scope>
</reference>
<reference key="2">
    <citation type="journal article" date="1996" name="DNA Res.">
        <title>A 460-kb DNA sequence of the Escherichia coli K-12 genome corresponding to the 40.1-50.0 min region on the linkage map.</title>
        <authorList>
            <person name="Itoh T."/>
            <person name="Aiba H."/>
            <person name="Baba T."/>
            <person name="Fujita K."/>
            <person name="Hayashi K."/>
            <person name="Inada T."/>
            <person name="Isono K."/>
            <person name="Kasai H."/>
            <person name="Kimura S."/>
            <person name="Kitakawa M."/>
            <person name="Kitagawa M."/>
            <person name="Makino K."/>
            <person name="Miki T."/>
            <person name="Mizobuchi K."/>
            <person name="Mori H."/>
            <person name="Mori T."/>
            <person name="Motomura K."/>
            <person name="Nakade S."/>
            <person name="Nakamura Y."/>
            <person name="Nashimoto H."/>
            <person name="Nishio Y."/>
            <person name="Oshima T."/>
            <person name="Saito N."/>
            <person name="Sampei G."/>
            <person name="Seki Y."/>
            <person name="Sivasundaram S."/>
            <person name="Tagami H."/>
            <person name="Takeda J."/>
            <person name="Takemoto K."/>
            <person name="Wada C."/>
            <person name="Yamamoto Y."/>
            <person name="Horiuchi T."/>
        </authorList>
    </citation>
    <scope>NUCLEOTIDE SEQUENCE [LARGE SCALE GENOMIC DNA]</scope>
    <source>
        <strain>K12 / W3110 / ATCC 27325 / DSM 5911</strain>
    </source>
</reference>
<reference key="3">
    <citation type="journal article" date="1997" name="Science">
        <title>The complete genome sequence of Escherichia coli K-12.</title>
        <authorList>
            <person name="Blattner F.R."/>
            <person name="Plunkett G. III"/>
            <person name="Bloch C.A."/>
            <person name="Perna N.T."/>
            <person name="Burland V."/>
            <person name="Riley M."/>
            <person name="Collado-Vides J."/>
            <person name="Glasner J.D."/>
            <person name="Rode C.K."/>
            <person name="Mayhew G.F."/>
            <person name="Gregor J."/>
            <person name="Davis N.W."/>
            <person name="Kirkpatrick H.A."/>
            <person name="Goeden M.A."/>
            <person name="Rose D.J."/>
            <person name="Mau B."/>
            <person name="Shao Y."/>
        </authorList>
    </citation>
    <scope>NUCLEOTIDE SEQUENCE [LARGE SCALE GENOMIC DNA]</scope>
    <source>
        <strain>K12 / MG1655 / ATCC 47076</strain>
    </source>
</reference>
<reference key="4">
    <citation type="journal article" date="2006" name="Mol. Syst. Biol.">
        <title>Highly accurate genome sequences of Escherichia coli K-12 strains MG1655 and W3110.</title>
        <authorList>
            <person name="Hayashi K."/>
            <person name="Morooka N."/>
            <person name="Yamamoto Y."/>
            <person name="Fujita K."/>
            <person name="Isono K."/>
            <person name="Choi S."/>
            <person name="Ohtsubo E."/>
            <person name="Baba T."/>
            <person name="Wanner B.L."/>
            <person name="Mori H."/>
            <person name="Horiuchi T."/>
        </authorList>
    </citation>
    <scope>NUCLEOTIDE SEQUENCE [LARGE SCALE GENOMIC DNA]</scope>
    <source>
        <strain>K12 / W3110 / ATCC 27325 / DSM 5911</strain>
    </source>
</reference>
<reference key="5">
    <citation type="journal article" date="1991" name="J. Bacteriol.">
        <title>Tandem translation starts in the cheA locus of Escherichia coli.</title>
        <authorList>
            <person name="Kofoid E.C."/>
            <person name="Parkinson J.S."/>
        </authorList>
    </citation>
    <scope>NUCLEOTIDE SEQUENCE [GENOMIC DNA] OF 276-308</scope>
</reference>
<reference key="6">
    <citation type="journal article" date="1988" name="Science">
        <title>Bacterial motility: membrane topology of the Escherichia coli MotB protein.</title>
        <authorList>
            <person name="Chun S.Y."/>
            <person name="Parkinson J.S."/>
        </authorList>
    </citation>
    <scope>SUBCELLULAR LOCATION</scope>
    <scope>TOPOLOGY</scope>
    <scope>SUGGESTION OF ROLE AS A CELL-WALL ANCHOR</scope>
</reference>
<reference key="7">
    <citation type="journal article" date="1991" name="J. Bacteriol.">
        <title>Mutant MotB proteins in Escherichia coli.</title>
        <authorList>
            <person name="Blair D.F."/>
            <person name="Kim D.Y."/>
            <person name="Berg H.C."/>
        </authorList>
    </citation>
    <scope>MUTAGENESIS OF ASP-32; ALA-39; PRO-159; GLY-164; THR-196; ASP-197; GLU-205; SER-214; ARG-217; ARG-222; GLY-240; ALA-242 AND ARG-258</scope>
    <source>
        <strain>K12 / RP437</strain>
    </source>
</reference>
<reference key="8">
    <citation type="journal article" date="2010" name="Mol. Cell">
        <title>The c-di-GMP binding protein YcgR controls flagellar motor direction and speed to affect chemotaxis by a 'backstop brake' mechanism.</title>
        <authorList>
            <person name="Paul K."/>
            <person name="Nieto V."/>
            <person name="Carlquist W.C."/>
            <person name="Blair D.F."/>
            <person name="Harshey R.M."/>
        </authorList>
    </citation>
    <scope>FUNCTION</scope>
    <source>
        <strain>K12 / RP3098</strain>
    </source>
</reference>
<reference key="9">
    <citation type="journal article" date="2008" name="Int. Rev. Cytol.">
        <title>Flagellar motility in bacteria structure and function of flagellar motor.</title>
        <authorList>
            <person name="Terashima H."/>
            <person name="Kojima S."/>
            <person name="Homma M."/>
        </authorList>
    </citation>
    <scope>REVIEW</scope>
</reference>
<organism>
    <name type="scientific">Escherichia coli (strain K12)</name>
    <dbReference type="NCBI Taxonomy" id="83333"/>
    <lineage>
        <taxon>Bacteria</taxon>
        <taxon>Pseudomonadati</taxon>
        <taxon>Pseudomonadota</taxon>
        <taxon>Gammaproteobacteria</taxon>
        <taxon>Enterobacterales</taxon>
        <taxon>Enterobacteriaceae</taxon>
        <taxon>Escherichia</taxon>
    </lineage>
</organism>
<dbReference type="EMBL" id="J01652">
    <property type="protein sequence ID" value="AAA24178.1"/>
    <property type="molecule type" value="Genomic_DNA"/>
</dbReference>
<dbReference type="EMBL" id="U00096">
    <property type="protein sequence ID" value="AAC74959.1"/>
    <property type="molecule type" value="Genomic_DNA"/>
</dbReference>
<dbReference type="EMBL" id="AP009048">
    <property type="protein sequence ID" value="BAA15710.1"/>
    <property type="molecule type" value="Genomic_DNA"/>
</dbReference>
<dbReference type="EMBL" id="M34669">
    <property type="protein sequence ID" value="AAA23572.1"/>
    <property type="molecule type" value="Genomic_DNA"/>
</dbReference>
<dbReference type="PIR" id="A64952">
    <property type="entry name" value="QRECMB"/>
</dbReference>
<dbReference type="RefSeq" id="NP_416403.1">
    <property type="nucleotide sequence ID" value="NC_000913.3"/>
</dbReference>
<dbReference type="RefSeq" id="WP_000795630.1">
    <property type="nucleotide sequence ID" value="NZ_STEB01000026.1"/>
</dbReference>
<dbReference type="SMR" id="P0AF06"/>
<dbReference type="BioGRID" id="4261035">
    <property type="interactions" value="420"/>
</dbReference>
<dbReference type="ComplexPortal" id="CPX-5884">
    <property type="entry name" value="Flagellar motor stator complex"/>
</dbReference>
<dbReference type="DIP" id="DIP-47996N"/>
<dbReference type="FunCoup" id="P0AF06">
    <property type="interactions" value="293"/>
</dbReference>
<dbReference type="IntAct" id="P0AF06">
    <property type="interactions" value="5"/>
</dbReference>
<dbReference type="STRING" id="511145.b1889"/>
<dbReference type="TCDB" id="1.A.30.1.1">
    <property type="family name" value="the h(+)- or na(+)-translocating bacterial flagellar motor/exbbd outer membrane transport energizer (mot/exb) superfamily"/>
</dbReference>
<dbReference type="PaxDb" id="511145-b1889"/>
<dbReference type="EnsemblBacteria" id="AAC74959">
    <property type="protein sequence ID" value="AAC74959"/>
    <property type="gene ID" value="b1889"/>
</dbReference>
<dbReference type="GeneID" id="75171962"/>
<dbReference type="GeneID" id="946402"/>
<dbReference type="KEGG" id="ecj:JW1878"/>
<dbReference type="KEGG" id="eco:b1889"/>
<dbReference type="KEGG" id="ecoc:C3026_10740"/>
<dbReference type="PATRIC" id="fig|1411691.4.peg.358"/>
<dbReference type="EchoBASE" id="EB0597"/>
<dbReference type="eggNOG" id="COG1360">
    <property type="taxonomic scope" value="Bacteria"/>
</dbReference>
<dbReference type="HOGENOM" id="CLU_016890_3_0_6"/>
<dbReference type="InParanoid" id="P0AF06"/>
<dbReference type="OMA" id="DEKNRPM"/>
<dbReference type="OrthoDB" id="9809186at2"/>
<dbReference type="PhylomeDB" id="P0AF06"/>
<dbReference type="BioCyc" id="EcoCyc:MOTB-FLAGELLAR-MOTOR-STATOR-PROTEIN"/>
<dbReference type="PHI-base" id="PHI:6534"/>
<dbReference type="PRO" id="PR:P0AF06"/>
<dbReference type="Proteomes" id="UP000000625">
    <property type="component" value="Chromosome"/>
</dbReference>
<dbReference type="GO" id="GO:0009288">
    <property type="term" value="C:bacterial-type flagellum"/>
    <property type="evidence" value="ECO:0000303"/>
    <property type="project" value="ComplexPortal"/>
</dbReference>
<dbReference type="GO" id="GO:0120101">
    <property type="term" value="C:bacterial-type flagellum stator complex"/>
    <property type="evidence" value="ECO:0000353"/>
    <property type="project" value="ComplexPortal"/>
</dbReference>
<dbReference type="GO" id="GO:0005886">
    <property type="term" value="C:plasma membrane"/>
    <property type="evidence" value="ECO:0000314"/>
    <property type="project" value="EcoliWiki"/>
</dbReference>
<dbReference type="GO" id="GO:0015252">
    <property type="term" value="F:proton channel activity"/>
    <property type="evidence" value="ECO:0000304"/>
    <property type="project" value="EcoCyc"/>
</dbReference>
<dbReference type="GO" id="GO:0071973">
    <property type="term" value="P:bacterial-type flagellum-dependent cell motility"/>
    <property type="evidence" value="ECO:0000315"/>
    <property type="project" value="EcoCyc"/>
</dbReference>
<dbReference type="GO" id="GO:0006935">
    <property type="term" value="P:chemotaxis"/>
    <property type="evidence" value="ECO:0000303"/>
    <property type="project" value="ComplexPortal"/>
</dbReference>
<dbReference type="GO" id="GO:1902600">
    <property type="term" value="P:proton transmembrane transport"/>
    <property type="evidence" value="ECO:0000304"/>
    <property type="project" value="EcoCyc"/>
</dbReference>
<dbReference type="CDD" id="cd07185">
    <property type="entry name" value="OmpA_C-like"/>
    <property type="match status" value="1"/>
</dbReference>
<dbReference type="FunFam" id="3.30.1330.60:FF:000003">
    <property type="entry name" value="Flagellar motor protein MotB"/>
    <property type="match status" value="1"/>
</dbReference>
<dbReference type="Gene3D" id="3.30.1330.60">
    <property type="entry name" value="OmpA-like domain"/>
    <property type="match status" value="1"/>
</dbReference>
<dbReference type="InterPro" id="IPR050330">
    <property type="entry name" value="Bact_OuterMem_StrucFunc"/>
</dbReference>
<dbReference type="InterPro" id="IPR025713">
    <property type="entry name" value="MotB-like_N_dom"/>
</dbReference>
<dbReference type="InterPro" id="IPR006665">
    <property type="entry name" value="OmpA-like"/>
</dbReference>
<dbReference type="InterPro" id="IPR036737">
    <property type="entry name" value="OmpA-like_sf"/>
</dbReference>
<dbReference type="NCBIfam" id="NF006548">
    <property type="entry name" value="PRK09041.1"/>
    <property type="match status" value="1"/>
</dbReference>
<dbReference type="PANTHER" id="PTHR30329:SF18">
    <property type="entry name" value="MOTILITY PROTEIN B"/>
    <property type="match status" value="1"/>
</dbReference>
<dbReference type="PANTHER" id="PTHR30329">
    <property type="entry name" value="STATOR ELEMENT OF FLAGELLAR MOTOR COMPLEX"/>
    <property type="match status" value="1"/>
</dbReference>
<dbReference type="Pfam" id="PF13677">
    <property type="entry name" value="MotB_plug"/>
    <property type="match status" value="1"/>
</dbReference>
<dbReference type="Pfam" id="PF00691">
    <property type="entry name" value="OmpA"/>
    <property type="match status" value="1"/>
</dbReference>
<dbReference type="SUPFAM" id="SSF103088">
    <property type="entry name" value="OmpA-like"/>
    <property type="match status" value="1"/>
</dbReference>
<dbReference type="PROSITE" id="PS51123">
    <property type="entry name" value="OMPA_2"/>
    <property type="match status" value="1"/>
</dbReference>
<name>MOTB_ECOLI</name>
<evidence type="ECO:0000255" key="1">
    <source>
        <dbReference type="PROSITE-ProRule" id="PRU00473"/>
    </source>
</evidence>
<evidence type="ECO:0000256" key="2">
    <source>
        <dbReference type="SAM" id="MobiDB-lite"/>
    </source>
</evidence>
<evidence type="ECO:0000269" key="3">
    <source>
    </source>
</evidence>
<evidence type="ECO:0000269" key="4">
    <source>
    </source>
</evidence>
<evidence type="ECO:0000269" key="5">
    <source>
    </source>
</evidence>
<evidence type="ECO:0000305" key="6"/>
<evidence type="ECO:0000305" key="7">
    <source>
    </source>
</evidence>
<proteinExistence type="evidence at protein level"/>
<sequence>MKNQAHPIIVVKRRKAKSHGAAHGSWKIAYADFMTAMMAFFLVMWLISISSPKELIQIAEYFRTPLATAVTGGDRISNSESPIPGGGDDYTQSQGEVNKQPNIEELKKRMEQSRLRKLRGDLDQLIESDPKLRALRPHLKIDLVQEGLRIQIIDSQNRPMFRTGSADVEPYMRDILRAIAPVLNGIPNRISLSGHTDDFPYASGEKGYSNWELSADRANASRRELMVGGLDSGKVLRVVGMAATMRLSDRGPDDAVNRRISLLVLNKQAEQAILHENAESQNEPVSALEKPEVAPQVSVPTMPSAEPR</sequence>
<comment type="function">
    <text evidence="3">MotA and MotB comprise the stator element of the flagellar motor complex. Required for the rotation of the flagellar motor. Probably a linker that fastens the torque-generating machinery to the cell wall. Overexpression of this protein with MotA improves motility in a pdeH disruption, (a c-di-GMP phosphodiesterase) suggesting there is an interaction (direct or indirect) between the c-di-GMP-binding flagellar brake protein YcgR and the flagellar stator.</text>
</comment>
<comment type="subunit">
    <text>Each stator complex is composed of 4 MotA and 2 MotB subunits; in E.coli 11 to 12 stator complexes can be involved in flagellar rotation. 2 A subunits and 1 B subunit are thought to form a single ion channel, so that each stator complex contains two channels.</text>
</comment>
<comment type="interaction">
    <interactant intactId="EBI-1117399">
        <id>P0AF06</id>
    </interactant>
    <interactant intactId="EBI-557926">
        <id>P09348</id>
        <label>motA</label>
    </interactant>
    <organismsDiffer>false</organismsDiffer>
    <experiments>2</experiments>
</comment>
<comment type="subcellular location">
    <subcellularLocation>
        <location evidence="5">Cell inner membrane</location>
        <topology evidence="5">Single-pass type II membrane protein</topology>
    </subcellularLocation>
    <text>The OmpA-like domain probably functions to anchor the complex to the cell wall.</text>
</comment>
<comment type="similarity">
    <text evidence="6">Belongs to the MotB family.</text>
</comment>
<protein>
    <recommendedName>
        <fullName>Motility protein B</fullName>
    </recommendedName>
    <alternativeName>
        <fullName>Chemotaxis protein MotB</fullName>
    </alternativeName>
</protein>
<keyword id="KW-0997">Cell inner membrane</keyword>
<keyword id="KW-1003">Cell membrane</keyword>
<keyword id="KW-0145">Chemotaxis</keyword>
<keyword id="KW-0283">Flagellar rotation</keyword>
<keyword id="KW-0472">Membrane</keyword>
<keyword id="KW-1185">Reference proteome</keyword>
<keyword id="KW-0735">Signal-anchor</keyword>
<keyword id="KW-0812">Transmembrane</keyword>
<keyword id="KW-1133">Transmembrane helix</keyword>
<accession>P0AF06</accession>
<accession>P09349</accession>
<gene>
    <name type="primary">motB</name>
    <name type="ordered locus">b1889</name>
    <name type="ordered locus">JW1878</name>
</gene>